<proteinExistence type="inferred from homology"/>
<sequence length="955" mass="106491">MTRKNTTTNPWAKFHGPNLGYVIEQYDLYVTGAGSVDPELQELFEIFGAPSFQDDVVTGDNTATHFSPQNTGNIEKILKVVQLVEQIRSFGHTLAHINPMEDAANGQSLLEKAMNELSDADLKAIPAKTVWPDAPEGIHTALDVIHRLKEVYTQSLAYEFSHIQDSEERAWLHQMVESNSLRQPLSNKKRTALLKRLTAVEGFEQFLHKTFVGQKRFSIEGVDMLVPVLDEIVLEGAKNGVEDVMIGMAHRGRLSVLAHVLEKPYSHMFAEFKHAKIEGAVANSGWTGDVKYHLGREQVVSNEEVSTRVTLANNPSHLEFVNPVVEGFARAAQENRKKSGLPEQDTSKSFVILVHGDAAFPGQGIVSETLNLSRLNAYQTGGTIHVIANNAVGFTTDSYDSRSTKYSSDLAKGFDIPIVHVNADDPEACLAAANLAIQYRMLFKKDFLIDLIGYRRYGHNEMDDPAVTQPQVYKKIKNHPTVRAIYADQLQAAGVLNADEIETITQFTQEQLKSDYAQVPPADTSDATIHVKVPDVVAKGIQPIDTGVELDSLRAINEGLLSWPEGFNVYPKVKKILERRKDALEENGKIEWALAESLAFASILQEGTPIRLTGQDSQRGTFAHRHIVLHDTDTNETYSPLHRLPNINASFSVHNSPLSEAAVVGYEYGYNVFAPETLVMWEAQYGDFSNTAQALFDQYVSAGRAKWGQKSGLVLLLPHGYEGQGPEHSSARPERFLQLAAENNWTVANLTSAAQYFHILRRQASILGTEAVRPLVLMTPKSLLRHPLTLSTASQLSEGRFQPALEQENLGTKPNKVKRLVLSTGKMAIDLAAEIESDKHEYNLDEIHIVRIEQLYPFPAEKVQSIIKRFKNLEEIIWVQEEPRNMGAWHYMAPILFELAGDKVKTGYIGRPDRSSPSGGDPFAHKAEQELIVSHALDVKYNFRQDKLEIEVFSN</sequence>
<keyword id="KW-0324">Glycolysis</keyword>
<keyword id="KW-0560">Oxidoreductase</keyword>
<keyword id="KW-0786">Thiamine pyrophosphate</keyword>
<organism>
    <name type="scientific">Bacillus cereus (strain AH820)</name>
    <dbReference type="NCBI Taxonomy" id="405535"/>
    <lineage>
        <taxon>Bacteria</taxon>
        <taxon>Bacillati</taxon>
        <taxon>Bacillota</taxon>
        <taxon>Bacilli</taxon>
        <taxon>Bacillales</taxon>
        <taxon>Bacillaceae</taxon>
        <taxon>Bacillus</taxon>
        <taxon>Bacillus cereus group</taxon>
    </lineage>
</organism>
<dbReference type="EC" id="1.2.4.2" evidence="1"/>
<dbReference type="EMBL" id="CP001283">
    <property type="protein sequence ID" value="ACK88594.1"/>
    <property type="molecule type" value="Genomic_DNA"/>
</dbReference>
<dbReference type="RefSeq" id="WP_000197126.1">
    <property type="nucleotide sequence ID" value="NC_011773.1"/>
</dbReference>
<dbReference type="SMR" id="B7JEU9"/>
<dbReference type="KEGG" id="bcu:BCAH820_1340"/>
<dbReference type="HOGENOM" id="CLU_004709_1_0_9"/>
<dbReference type="Proteomes" id="UP000001363">
    <property type="component" value="Chromosome"/>
</dbReference>
<dbReference type="GO" id="GO:0005829">
    <property type="term" value="C:cytosol"/>
    <property type="evidence" value="ECO:0007669"/>
    <property type="project" value="TreeGrafter"/>
</dbReference>
<dbReference type="GO" id="GO:0045252">
    <property type="term" value="C:oxoglutarate dehydrogenase complex"/>
    <property type="evidence" value="ECO:0007669"/>
    <property type="project" value="TreeGrafter"/>
</dbReference>
<dbReference type="GO" id="GO:0004591">
    <property type="term" value="F:oxoglutarate dehydrogenase (succinyl-transferring) activity"/>
    <property type="evidence" value="ECO:0007669"/>
    <property type="project" value="UniProtKB-UniRule"/>
</dbReference>
<dbReference type="GO" id="GO:0030976">
    <property type="term" value="F:thiamine pyrophosphate binding"/>
    <property type="evidence" value="ECO:0007669"/>
    <property type="project" value="UniProtKB-UniRule"/>
</dbReference>
<dbReference type="GO" id="GO:0006096">
    <property type="term" value="P:glycolytic process"/>
    <property type="evidence" value="ECO:0007669"/>
    <property type="project" value="UniProtKB-UniRule"/>
</dbReference>
<dbReference type="GO" id="GO:0006099">
    <property type="term" value="P:tricarboxylic acid cycle"/>
    <property type="evidence" value="ECO:0007669"/>
    <property type="project" value="TreeGrafter"/>
</dbReference>
<dbReference type="CDD" id="cd02016">
    <property type="entry name" value="TPP_E1_OGDC_like"/>
    <property type="match status" value="1"/>
</dbReference>
<dbReference type="FunFam" id="3.40.50.11610:FF:000002">
    <property type="entry name" value="2-oxoglutarate dehydrogenase E1 component"/>
    <property type="match status" value="1"/>
</dbReference>
<dbReference type="FunFam" id="3.40.50.970:FF:000036">
    <property type="entry name" value="2-oxoglutarate dehydrogenase E1 component"/>
    <property type="match status" value="1"/>
</dbReference>
<dbReference type="Gene3D" id="3.40.50.12470">
    <property type="match status" value="1"/>
</dbReference>
<dbReference type="Gene3D" id="3.40.50.970">
    <property type="match status" value="1"/>
</dbReference>
<dbReference type="Gene3D" id="3.40.50.11610">
    <property type="entry name" value="Multifunctional 2-oxoglutarate metabolism enzyme, C-terminal domain"/>
    <property type="match status" value="1"/>
</dbReference>
<dbReference type="HAMAP" id="MF_01169">
    <property type="entry name" value="SucA_OdhA"/>
    <property type="match status" value="1"/>
</dbReference>
<dbReference type="InterPro" id="IPR011603">
    <property type="entry name" value="2oxoglutarate_DH_E1"/>
</dbReference>
<dbReference type="InterPro" id="IPR023784">
    <property type="entry name" value="2oxoglutarate_DH_E1_bac"/>
</dbReference>
<dbReference type="InterPro" id="IPR001017">
    <property type="entry name" value="DH_E1"/>
</dbReference>
<dbReference type="InterPro" id="IPR042179">
    <property type="entry name" value="KGD_C_sf"/>
</dbReference>
<dbReference type="InterPro" id="IPR031717">
    <property type="entry name" value="ODO-1/KGD_C"/>
</dbReference>
<dbReference type="InterPro" id="IPR029061">
    <property type="entry name" value="THDP-binding"/>
</dbReference>
<dbReference type="InterPro" id="IPR005475">
    <property type="entry name" value="Transketolase-like_Pyr-bd"/>
</dbReference>
<dbReference type="NCBIfam" id="TIGR00239">
    <property type="entry name" value="2oxo_dh_E1"/>
    <property type="match status" value="1"/>
</dbReference>
<dbReference type="NCBIfam" id="NF006914">
    <property type="entry name" value="PRK09404.1"/>
    <property type="match status" value="1"/>
</dbReference>
<dbReference type="NCBIfam" id="NF008907">
    <property type="entry name" value="PRK12270.1"/>
    <property type="match status" value="1"/>
</dbReference>
<dbReference type="PANTHER" id="PTHR23152:SF4">
    <property type="entry name" value="2-OXOADIPATE DEHYDROGENASE COMPLEX COMPONENT E1"/>
    <property type="match status" value="1"/>
</dbReference>
<dbReference type="PANTHER" id="PTHR23152">
    <property type="entry name" value="2-OXOGLUTARATE DEHYDROGENASE"/>
    <property type="match status" value="1"/>
</dbReference>
<dbReference type="Pfam" id="PF00676">
    <property type="entry name" value="E1_dh"/>
    <property type="match status" value="1"/>
</dbReference>
<dbReference type="Pfam" id="PF16870">
    <property type="entry name" value="OxoGdeHyase_C"/>
    <property type="match status" value="1"/>
</dbReference>
<dbReference type="Pfam" id="PF02779">
    <property type="entry name" value="Transket_pyr"/>
    <property type="match status" value="1"/>
</dbReference>
<dbReference type="PIRSF" id="PIRSF000157">
    <property type="entry name" value="Oxoglu_dh_E1"/>
    <property type="match status" value="1"/>
</dbReference>
<dbReference type="SMART" id="SM00861">
    <property type="entry name" value="Transket_pyr"/>
    <property type="match status" value="1"/>
</dbReference>
<dbReference type="SUPFAM" id="SSF52518">
    <property type="entry name" value="Thiamin diphosphate-binding fold (THDP-binding)"/>
    <property type="match status" value="2"/>
</dbReference>
<evidence type="ECO:0000255" key="1">
    <source>
        <dbReference type="HAMAP-Rule" id="MF_01169"/>
    </source>
</evidence>
<name>ODO1_BACC0</name>
<gene>
    <name evidence="1" type="primary">odhA</name>
    <name type="ordered locus">BCAH820_1340</name>
</gene>
<reference key="1">
    <citation type="submission" date="2008-10" db="EMBL/GenBank/DDBJ databases">
        <title>Genome sequence of Bacillus cereus AH820.</title>
        <authorList>
            <person name="Dodson R.J."/>
            <person name="Durkin A.S."/>
            <person name="Rosovitz M.J."/>
            <person name="Rasko D.A."/>
            <person name="Hoffmaster A."/>
            <person name="Ravel J."/>
            <person name="Sutton G."/>
        </authorList>
    </citation>
    <scope>NUCLEOTIDE SEQUENCE [LARGE SCALE GENOMIC DNA]</scope>
    <source>
        <strain>AH820</strain>
    </source>
</reference>
<protein>
    <recommendedName>
        <fullName evidence="1">2-oxoglutarate dehydrogenase E1 component</fullName>
        <ecNumber evidence="1">1.2.4.2</ecNumber>
    </recommendedName>
    <alternativeName>
        <fullName evidence="1">Alpha-ketoglutarate dehydrogenase</fullName>
    </alternativeName>
</protein>
<accession>B7JEU9</accession>
<comment type="function">
    <text evidence="1">E1 component of the 2-oxoglutarate dehydrogenase (OGDH) complex which catalyzes the decarboxylation of 2-oxoglutarate, the first step in the conversion of 2-oxoglutarate to succinyl-CoA and CO(2).</text>
</comment>
<comment type="catalytic activity">
    <reaction evidence="1">
        <text>N(6)-[(R)-lipoyl]-L-lysyl-[protein] + 2-oxoglutarate + H(+) = N(6)-[(R)-S(8)-succinyldihydrolipoyl]-L-lysyl-[protein] + CO2</text>
        <dbReference type="Rhea" id="RHEA:12188"/>
        <dbReference type="Rhea" id="RHEA-COMP:10474"/>
        <dbReference type="Rhea" id="RHEA-COMP:20092"/>
        <dbReference type="ChEBI" id="CHEBI:15378"/>
        <dbReference type="ChEBI" id="CHEBI:16526"/>
        <dbReference type="ChEBI" id="CHEBI:16810"/>
        <dbReference type="ChEBI" id="CHEBI:83099"/>
        <dbReference type="ChEBI" id="CHEBI:83120"/>
        <dbReference type="EC" id="1.2.4.2"/>
    </reaction>
</comment>
<comment type="cofactor">
    <cofactor evidence="1">
        <name>thiamine diphosphate</name>
        <dbReference type="ChEBI" id="CHEBI:58937"/>
    </cofactor>
</comment>
<comment type="subunit">
    <text evidence="1">Homodimer. Part of the 2-oxoglutarate dehydrogenase (OGDH) complex composed of E1 (2-oxoglutarate dehydrogenase), E2 (dihydrolipoamide succinyltransferase) and E3 (dihydrolipoamide dehydrogenase); the complex contains multiple copies of the three enzymatic components (E1, E2 and E3).</text>
</comment>
<comment type="similarity">
    <text evidence="1">Belongs to the alpha-ketoglutarate dehydrogenase family.</text>
</comment>
<feature type="chain" id="PRO_1000137966" description="2-oxoglutarate dehydrogenase E1 component">
    <location>
        <begin position="1"/>
        <end position="955"/>
    </location>
</feature>